<name>PSP1_CHRIL</name>
<accession>O61704</accession>
<organism>
    <name type="scientific">Chrysodeixis includens</name>
    <name type="common">Soybean looper</name>
    <name type="synonym">Pseudoplusia includens</name>
    <dbReference type="NCBI Taxonomy" id="689277"/>
    <lineage>
        <taxon>Eukaryota</taxon>
        <taxon>Metazoa</taxon>
        <taxon>Ecdysozoa</taxon>
        <taxon>Arthropoda</taxon>
        <taxon>Hexapoda</taxon>
        <taxon>Insecta</taxon>
        <taxon>Pterygota</taxon>
        <taxon>Neoptera</taxon>
        <taxon>Endopterygota</taxon>
        <taxon>Lepidoptera</taxon>
        <taxon>Glossata</taxon>
        <taxon>Ditrysia</taxon>
        <taxon>Noctuoidea</taxon>
        <taxon>Noctuidae</taxon>
        <taxon>Plusiinae</taxon>
        <taxon>Chrysodeixis</taxon>
    </lineage>
</organism>
<evidence type="ECO:0000255" key="1"/>
<evidence type="ECO:0000256" key="2">
    <source>
        <dbReference type="SAM" id="MobiDB-lite"/>
    </source>
</evidence>
<evidence type="ECO:0000269" key="3">
    <source>
    </source>
</evidence>
<evidence type="ECO:0000305" key="4"/>
<evidence type="ECO:0007829" key="5">
    <source>
        <dbReference type="PDB" id="1B1V"/>
    </source>
</evidence>
<comment type="function">
    <text>Mediates the spreading of plasmatocytes to foreign surfaces. Plasmocytes are a class of hemocytes involved in insect cellular immunity.</text>
</comment>
<comment type="similarity">
    <text evidence="4">Belongs to the GBP/PSP1/paralytic peptide family.</text>
</comment>
<gene>
    <name type="primary">PSP1</name>
</gene>
<dbReference type="EMBL" id="AF062489">
    <property type="protein sequence ID" value="AAC16546.1"/>
    <property type="molecule type" value="mRNA"/>
</dbReference>
<dbReference type="PIR" id="JE0359">
    <property type="entry name" value="JE0359"/>
</dbReference>
<dbReference type="PDB" id="1B1V">
    <property type="method" value="NMR"/>
    <property type="chains" value="A=119-141"/>
</dbReference>
<dbReference type="PDB" id="1B5N">
    <property type="method" value="NMR"/>
    <property type="chains" value="A=119-141"/>
</dbReference>
<dbReference type="PDBsum" id="1B1V"/>
<dbReference type="PDBsum" id="1B5N"/>
<dbReference type="SMR" id="O61704"/>
<dbReference type="OrthoDB" id="7439590at2759"/>
<dbReference type="EvolutionaryTrace" id="O61704"/>
<dbReference type="GO" id="GO:0005615">
    <property type="term" value="C:extracellular space"/>
    <property type="evidence" value="ECO:0007669"/>
    <property type="project" value="UniProtKB-KW"/>
</dbReference>
<dbReference type="GO" id="GO:0005125">
    <property type="term" value="F:cytokine activity"/>
    <property type="evidence" value="ECO:0007669"/>
    <property type="project" value="UniProtKB-KW"/>
</dbReference>
<dbReference type="InterPro" id="IPR003463">
    <property type="entry name" value="GBP_PSP"/>
</dbReference>
<dbReference type="Pfam" id="PF02425">
    <property type="entry name" value="GBP_PSP"/>
    <property type="match status" value="1"/>
</dbReference>
<sequence length="141" mass="14953">MKLTINILFCLILISQYNSANGNLRDLFNNVRGSISSSANKIRQDVKTLFHPSDKSGNKESSNIVFVEDKDEGAVGPARDNKPVAVTPAPVVSTTTQASAPTVATNGTATGGKDDKGRENFNGGCLAGYMRTADGRCKPTF</sequence>
<feature type="signal peptide" evidence="1">
    <location>
        <begin position="1"/>
        <end position="22"/>
    </location>
</feature>
<feature type="propeptide" id="PRO_0000010716" evidence="3">
    <location>
        <begin position="23"/>
        <end position="118"/>
    </location>
</feature>
<feature type="peptide" id="PRO_0000010717" description="Plasmatocyte-spreading peptide">
    <location>
        <begin position="119"/>
        <end position="141"/>
    </location>
</feature>
<feature type="region of interest" description="Disordered" evidence="2">
    <location>
        <begin position="46"/>
        <end position="118"/>
    </location>
</feature>
<feature type="compositionally biased region" description="Basic and acidic residues" evidence="2">
    <location>
        <begin position="46"/>
        <end position="58"/>
    </location>
</feature>
<feature type="compositionally biased region" description="Low complexity" evidence="2">
    <location>
        <begin position="83"/>
        <end position="98"/>
    </location>
</feature>
<feature type="compositionally biased region" description="Polar residues" evidence="2">
    <location>
        <begin position="99"/>
        <end position="108"/>
    </location>
</feature>
<feature type="disulfide bond">
    <location>
        <begin position="125"/>
        <end position="137"/>
    </location>
</feature>
<feature type="strand" evidence="5">
    <location>
        <begin position="122"/>
        <end position="124"/>
    </location>
</feature>
<feature type="strand" evidence="5">
    <location>
        <begin position="126"/>
        <end position="128"/>
    </location>
</feature>
<reference key="1">
    <citation type="journal article" date="1998" name="Biochem. Biophys. Res. Commun.">
        <title>Plasmatocyte spreading peptide is encoded by an mRNA differentially expressed in tissues of the moth Pseudoplusia includens.</title>
        <authorList>
            <person name="Clark K.D."/>
            <person name="Witherell A."/>
            <person name="Strand M.R."/>
        </authorList>
    </citation>
    <scope>NUCLEOTIDE SEQUENCE [MRNA]</scope>
</reference>
<reference key="2">
    <citation type="journal article" date="1997" name="J. Biol. Chem.">
        <title>Isolation and identification of a plasmatocyte-spreading peptide from the hemolymph of the lepidopteran insect Pseudoplusia includens.</title>
        <authorList>
            <person name="Clark K.D."/>
            <person name="Pech L.L."/>
            <person name="Strand M.R."/>
        </authorList>
    </citation>
    <scope>PROTEIN SEQUENCE OF 119-141</scope>
    <source>
        <tissue>Hemolymph</tissue>
    </source>
</reference>
<reference key="3">
    <citation type="journal article" date="1999" name="J. Biol. Chem.">
        <title>Structure of the insect cytokine peptide plasmatocyte-spreading peptide 1 from Pseudoplusia includens.</title>
        <authorList>
            <person name="Volkman B.F."/>
            <person name="Anderson M.E."/>
            <person name="Clark K.D."/>
            <person name="Hayakawa Y."/>
            <person name="Strand M.R."/>
            <person name="Markley J.L."/>
        </authorList>
    </citation>
    <scope>STRUCTURE BY NMR OF 119-141</scope>
    <source>
        <tissue>Hemolymph</tissue>
    </source>
</reference>
<protein>
    <recommendedName>
        <fullName>Plasmatocyte-spreading peptide</fullName>
    </recommendedName>
</protein>
<keyword id="KW-0002">3D-structure</keyword>
<keyword id="KW-0202">Cytokine</keyword>
<keyword id="KW-0903">Direct protein sequencing</keyword>
<keyword id="KW-1015">Disulfide bond</keyword>
<keyword id="KW-0732">Signal</keyword>
<proteinExistence type="evidence at protein level"/>